<feature type="chain" id="PRO_1000068784" description="Sulfite reductase [NADPH] hemoprotein beta-component">
    <location>
        <begin position="1"/>
        <end position="576"/>
    </location>
</feature>
<feature type="binding site" evidence="1">
    <location>
        <position position="435"/>
    </location>
    <ligand>
        <name>[4Fe-4S] cluster</name>
        <dbReference type="ChEBI" id="CHEBI:49883"/>
    </ligand>
</feature>
<feature type="binding site" evidence="1">
    <location>
        <position position="441"/>
    </location>
    <ligand>
        <name>[4Fe-4S] cluster</name>
        <dbReference type="ChEBI" id="CHEBI:49883"/>
    </ligand>
</feature>
<feature type="binding site" evidence="1">
    <location>
        <position position="480"/>
    </location>
    <ligand>
        <name>[4Fe-4S] cluster</name>
        <dbReference type="ChEBI" id="CHEBI:49883"/>
    </ligand>
</feature>
<feature type="binding site" evidence="1">
    <location>
        <position position="484"/>
    </location>
    <ligand>
        <name>[4Fe-4S] cluster</name>
        <dbReference type="ChEBI" id="CHEBI:49883"/>
    </ligand>
</feature>
<feature type="binding site" description="axial binding residue" evidence="1">
    <location>
        <position position="484"/>
    </location>
    <ligand>
        <name>siroheme</name>
        <dbReference type="ChEBI" id="CHEBI:60052"/>
    </ligand>
    <ligandPart>
        <name>Fe</name>
        <dbReference type="ChEBI" id="CHEBI:18248"/>
    </ligandPart>
</feature>
<protein>
    <recommendedName>
        <fullName evidence="1">Sulfite reductase [NADPH] hemoprotein beta-component</fullName>
        <shortName evidence="1">SiR-HP</shortName>
        <shortName evidence="1">SiRHP</shortName>
        <ecNumber evidence="1">1.8.1.2</ecNumber>
    </recommendedName>
</protein>
<accession>A4TPY6</accession>
<keyword id="KW-0004">4Fe-4S</keyword>
<keyword id="KW-0028">Amino-acid biosynthesis</keyword>
<keyword id="KW-0198">Cysteine biosynthesis</keyword>
<keyword id="KW-0349">Heme</keyword>
<keyword id="KW-0408">Iron</keyword>
<keyword id="KW-0411">Iron-sulfur</keyword>
<keyword id="KW-0479">Metal-binding</keyword>
<keyword id="KW-0521">NADP</keyword>
<keyword id="KW-0560">Oxidoreductase</keyword>
<name>CYSI_YERPP</name>
<reference key="1">
    <citation type="submission" date="2007-02" db="EMBL/GenBank/DDBJ databases">
        <title>Complete sequence of chromosome of Yersinia pestis Pestoides F.</title>
        <authorList>
            <consortium name="US DOE Joint Genome Institute"/>
            <person name="Copeland A."/>
            <person name="Lucas S."/>
            <person name="Lapidus A."/>
            <person name="Barry K."/>
            <person name="Detter J.C."/>
            <person name="Glavina del Rio T."/>
            <person name="Hammon N."/>
            <person name="Israni S."/>
            <person name="Dalin E."/>
            <person name="Tice H."/>
            <person name="Pitluck S."/>
            <person name="Di Bartolo G."/>
            <person name="Chain P."/>
            <person name="Malfatti S."/>
            <person name="Shin M."/>
            <person name="Vergez L."/>
            <person name="Schmutz J."/>
            <person name="Larimer F."/>
            <person name="Land M."/>
            <person name="Hauser L."/>
            <person name="Worsham P."/>
            <person name="Chu M."/>
            <person name="Bearden S."/>
            <person name="Garcia E."/>
            <person name="Richardson P."/>
        </authorList>
    </citation>
    <scope>NUCLEOTIDE SEQUENCE [LARGE SCALE GENOMIC DNA]</scope>
    <source>
        <strain>Pestoides F</strain>
    </source>
</reference>
<dbReference type="EC" id="1.8.1.2" evidence="1"/>
<dbReference type="EMBL" id="CP000668">
    <property type="protein sequence ID" value="ABP41348.1"/>
    <property type="molecule type" value="Genomic_DNA"/>
</dbReference>
<dbReference type="RefSeq" id="WP_002209382.1">
    <property type="nucleotide sequence ID" value="NZ_CP009715.1"/>
</dbReference>
<dbReference type="SMR" id="A4TPY6"/>
<dbReference type="GeneID" id="57975337"/>
<dbReference type="KEGG" id="ypp:YPDSF_2988"/>
<dbReference type="PATRIC" id="fig|386656.14.peg.1376"/>
<dbReference type="UniPathway" id="UPA00140">
    <property type="reaction ID" value="UER00207"/>
</dbReference>
<dbReference type="GO" id="GO:0009337">
    <property type="term" value="C:sulfite reductase complex (NADPH)"/>
    <property type="evidence" value="ECO:0007669"/>
    <property type="project" value="InterPro"/>
</dbReference>
<dbReference type="GO" id="GO:0051539">
    <property type="term" value="F:4 iron, 4 sulfur cluster binding"/>
    <property type="evidence" value="ECO:0007669"/>
    <property type="project" value="UniProtKB-KW"/>
</dbReference>
<dbReference type="GO" id="GO:0020037">
    <property type="term" value="F:heme binding"/>
    <property type="evidence" value="ECO:0007669"/>
    <property type="project" value="InterPro"/>
</dbReference>
<dbReference type="GO" id="GO:0046872">
    <property type="term" value="F:metal ion binding"/>
    <property type="evidence" value="ECO:0007669"/>
    <property type="project" value="UniProtKB-KW"/>
</dbReference>
<dbReference type="GO" id="GO:0050661">
    <property type="term" value="F:NADP binding"/>
    <property type="evidence" value="ECO:0007669"/>
    <property type="project" value="InterPro"/>
</dbReference>
<dbReference type="GO" id="GO:0050311">
    <property type="term" value="F:sulfite reductase (ferredoxin) activity"/>
    <property type="evidence" value="ECO:0007669"/>
    <property type="project" value="TreeGrafter"/>
</dbReference>
<dbReference type="GO" id="GO:0004783">
    <property type="term" value="F:sulfite reductase (NADPH) activity"/>
    <property type="evidence" value="ECO:0007669"/>
    <property type="project" value="UniProtKB-UniRule"/>
</dbReference>
<dbReference type="GO" id="GO:0019344">
    <property type="term" value="P:cysteine biosynthetic process"/>
    <property type="evidence" value="ECO:0007669"/>
    <property type="project" value="UniProtKB-KW"/>
</dbReference>
<dbReference type="GO" id="GO:0070814">
    <property type="term" value="P:hydrogen sulfide biosynthetic process"/>
    <property type="evidence" value="ECO:0007669"/>
    <property type="project" value="UniProtKB-UniRule"/>
</dbReference>
<dbReference type="GO" id="GO:0000103">
    <property type="term" value="P:sulfate assimilation"/>
    <property type="evidence" value="ECO:0007669"/>
    <property type="project" value="UniProtKB-UniRule"/>
</dbReference>
<dbReference type="FunFam" id="3.30.413.10:FF:000003">
    <property type="entry name" value="Sulfite reductase [NADPH] hemoprotein beta-component"/>
    <property type="match status" value="1"/>
</dbReference>
<dbReference type="FunFam" id="3.30.413.10:FF:000004">
    <property type="entry name" value="Sulfite reductase [NADPH] hemoprotein beta-component"/>
    <property type="match status" value="1"/>
</dbReference>
<dbReference type="Gene3D" id="3.30.413.10">
    <property type="entry name" value="Sulfite Reductase Hemoprotein, domain 1"/>
    <property type="match status" value="2"/>
</dbReference>
<dbReference type="HAMAP" id="MF_01540">
    <property type="entry name" value="CysI"/>
    <property type="match status" value="1"/>
</dbReference>
<dbReference type="InterPro" id="IPR011786">
    <property type="entry name" value="CysI"/>
</dbReference>
<dbReference type="InterPro" id="IPR005117">
    <property type="entry name" value="NiRdtase/SiRdtase_haem-b_fer"/>
</dbReference>
<dbReference type="InterPro" id="IPR036136">
    <property type="entry name" value="Nit/Sulf_reduc_fer-like_dom_sf"/>
</dbReference>
<dbReference type="InterPro" id="IPR006067">
    <property type="entry name" value="NO2/SO3_Rdtase_4Fe4S_dom"/>
</dbReference>
<dbReference type="InterPro" id="IPR045169">
    <property type="entry name" value="NO2/SO3_Rdtase_4Fe4S_prot"/>
</dbReference>
<dbReference type="InterPro" id="IPR045854">
    <property type="entry name" value="NO2/SO3_Rdtase_4Fe4S_sf"/>
</dbReference>
<dbReference type="InterPro" id="IPR006066">
    <property type="entry name" value="NO2/SO3_Rdtase_FeS/sirohaem_BS"/>
</dbReference>
<dbReference type="NCBIfam" id="TIGR02041">
    <property type="entry name" value="CysI"/>
    <property type="match status" value="1"/>
</dbReference>
<dbReference type="NCBIfam" id="NF010029">
    <property type="entry name" value="PRK13504.1"/>
    <property type="match status" value="1"/>
</dbReference>
<dbReference type="PANTHER" id="PTHR11493:SF47">
    <property type="entry name" value="SULFITE REDUCTASE [NADPH] SUBUNIT BETA"/>
    <property type="match status" value="1"/>
</dbReference>
<dbReference type="PANTHER" id="PTHR11493">
    <property type="entry name" value="SULFITE REDUCTASE [NADPH] SUBUNIT BETA-RELATED"/>
    <property type="match status" value="1"/>
</dbReference>
<dbReference type="Pfam" id="PF01077">
    <property type="entry name" value="NIR_SIR"/>
    <property type="match status" value="1"/>
</dbReference>
<dbReference type="Pfam" id="PF03460">
    <property type="entry name" value="NIR_SIR_ferr"/>
    <property type="match status" value="2"/>
</dbReference>
<dbReference type="PRINTS" id="PR00397">
    <property type="entry name" value="SIROHAEM"/>
</dbReference>
<dbReference type="SUPFAM" id="SSF56014">
    <property type="entry name" value="Nitrite and sulphite reductase 4Fe-4S domain-like"/>
    <property type="match status" value="2"/>
</dbReference>
<dbReference type="SUPFAM" id="SSF55124">
    <property type="entry name" value="Nitrite/Sulfite reductase N-terminal domain-like"/>
    <property type="match status" value="2"/>
</dbReference>
<dbReference type="PROSITE" id="PS00365">
    <property type="entry name" value="NIR_SIR"/>
    <property type="match status" value="1"/>
</dbReference>
<comment type="function">
    <text evidence="1">Component of the sulfite reductase complex that catalyzes the 6-electron reduction of sulfite to sulfide. This is one of several activities required for the biosynthesis of L-cysteine from sulfate.</text>
</comment>
<comment type="catalytic activity">
    <reaction evidence="1">
        <text>hydrogen sulfide + 3 NADP(+) + 3 H2O = sulfite + 3 NADPH + 4 H(+)</text>
        <dbReference type="Rhea" id="RHEA:13801"/>
        <dbReference type="ChEBI" id="CHEBI:15377"/>
        <dbReference type="ChEBI" id="CHEBI:15378"/>
        <dbReference type="ChEBI" id="CHEBI:17359"/>
        <dbReference type="ChEBI" id="CHEBI:29919"/>
        <dbReference type="ChEBI" id="CHEBI:57783"/>
        <dbReference type="ChEBI" id="CHEBI:58349"/>
        <dbReference type="EC" id="1.8.1.2"/>
    </reaction>
</comment>
<comment type="cofactor">
    <cofactor evidence="1">
        <name>siroheme</name>
        <dbReference type="ChEBI" id="CHEBI:60052"/>
    </cofactor>
    <text evidence="1">Binds 1 siroheme per subunit.</text>
</comment>
<comment type="cofactor">
    <cofactor evidence="1">
        <name>[4Fe-4S] cluster</name>
        <dbReference type="ChEBI" id="CHEBI:49883"/>
    </cofactor>
    <text evidence="1">Binds 1 [4Fe-4S] cluster per subunit.</text>
</comment>
<comment type="pathway">
    <text evidence="1">Sulfur metabolism; hydrogen sulfide biosynthesis; hydrogen sulfide from sulfite (NADPH route): step 1/1.</text>
</comment>
<comment type="subunit">
    <text evidence="1">Alpha(8)-beta(8). The alpha component is a flavoprotein, the beta component is a hemoprotein.</text>
</comment>
<comment type="similarity">
    <text evidence="1">Belongs to the nitrite and sulfite reductase 4Fe-4S domain family.</text>
</comment>
<gene>
    <name evidence="1" type="primary">cysI</name>
    <name type="ordered locus">YPDSF_2988</name>
</gene>
<organism>
    <name type="scientific">Yersinia pestis (strain Pestoides F)</name>
    <dbReference type="NCBI Taxonomy" id="386656"/>
    <lineage>
        <taxon>Bacteria</taxon>
        <taxon>Pseudomonadati</taxon>
        <taxon>Pseudomonadota</taxon>
        <taxon>Gammaproteobacteria</taxon>
        <taxon>Enterobacterales</taxon>
        <taxon>Yersiniaceae</taxon>
        <taxon>Yersinia</taxon>
    </lineage>
</organism>
<sequence length="576" mass="64076">MNEKHPGPLVVSGKLSDGERMKSESNFLRGTIAEDLNNGLTGGFSGDNFLLIRFHGMYQQDDRDIRAERAEQKLEPRHAMMLRCRLPGGIITPQQWLGIDKFAADNTLYGSIRITNRQTFQFHGILKGNVKPAHQLLNELGLDALATANDVNRNVLCTSNPVESALHQEAYEWAKKISEHLLPRTRAYAEIWLDAEKVATTDEEPILGATYLPRKFKTTVVIPPQNDVDLHANDLNFVAVADKGKLIGFNVLVGGGLSIAHGDKNTYPRKASEFGYIPLKHTLAIAEAVVTTQRDWGNRTDRKNAKTKYTLERVGVETFKAEVEKRAGVSFSAIKPYQFIGRGDRIGWVKGVDKKWHLTLFVENGRLLDYPGRSLKTGVAEIAKIHQGDFRLTANQNLIVAGVPEKDKARIEALAREHGLMDDNVTSQRENSMACVSFPTCPLAMAEAERFLPEFVTRVEGILQQHGLADEHIVLRVTGCPNGCGRALLAEVGLVGKAVGRYNLHLGGNREGTRIPRMYRENITADEILLITDQLVGRWAKERHVDEGFGDFVIRAGVIAPVIDSARDFYDVQEAM</sequence>
<proteinExistence type="inferred from homology"/>
<evidence type="ECO:0000255" key="1">
    <source>
        <dbReference type="HAMAP-Rule" id="MF_01540"/>
    </source>
</evidence>